<comment type="catalytic activity">
    <reaction>
        <text>D-glyceraldehyde 3-phosphate = dihydroxyacetone phosphate</text>
        <dbReference type="Rhea" id="RHEA:18585"/>
        <dbReference type="ChEBI" id="CHEBI:57642"/>
        <dbReference type="ChEBI" id="CHEBI:59776"/>
        <dbReference type="EC" id="5.3.1.1"/>
    </reaction>
</comment>
<comment type="pathway">
    <text>Carbohydrate biosynthesis; gluconeogenesis.</text>
</comment>
<comment type="pathway">
    <text>Carbohydrate degradation; glycolysis; D-glyceraldehyde 3-phosphate from glycerone phosphate: step 1/1.</text>
</comment>
<comment type="subunit">
    <text evidence="1">Homodimer.</text>
</comment>
<comment type="similarity">
    <text evidence="2">Belongs to the triosephosphate isomerase family.</text>
</comment>
<organism>
    <name type="scientific">Kluyveromyces marxianus</name>
    <name type="common">Yeast</name>
    <name type="synonym">Candida kefyr</name>
    <dbReference type="NCBI Taxonomy" id="4911"/>
    <lineage>
        <taxon>Eukaryota</taxon>
        <taxon>Fungi</taxon>
        <taxon>Dikarya</taxon>
        <taxon>Ascomycota</taxon>
        <taxon>Saccharomycotina</taxon>
        <taxon>Saccharomycetes</taxon>
        <taxon>Saccharomycetales</taxon>
        <taxon>Saccharomycetaceae</taxon>
        <taxon>Kluyveromyces</taxon>
    </lineage>
</organism>
<sequence>MARTFFIGGNFKMNGTKASIKEIVERLNSASIPSNVEVVIAPPAAYLDHAVSLNKKAQVSVAAQNAYLKASGAFTGENSVEQIKDVGAEWVILGHSERRTYFHETDEFIADKTKFALDSGVKVILCIGETLEEKQKGITLEVVQRQLQAVLDKVQDWTNVVVAYEPVWAIGTGLAATSDDAQAIHHSIREFLAKKLSKDTAEKIRILYGGSANGKNAVTFKDKADVDGFLVGGASLKPEFVDIINSRV</sequence>
<name>TPIS_KLUMA</name>
<reference key="1">
    <citation type="submission" date="2003-07" db="EMBL/GenBank/DDBJ databases">
        <title>Triosephosphate isomerase of the yeast Kluyveromyces marxianus.</title>
        <authorList>
            <person name="Siekstele R."/>
            <person name="Bartkeviciute D."/>
            <person name="Becher D."/>
            <person name="Dohner L."/>
            <person name="Sasnauskas K."/>
        </authorList>
    </citation>
    <scope>NUCLEOTIDE SEQUENCE [GENOMIC DNA]</scope>
</reference>
<feature type="chain" id="PRO_0000090164" description="Triosephosphate isomerase">
    <location>
        <begin position="1"/>
        <end position="248"/>
    </location>
</feature>
<feature type="active site" description="Electrophile" evidence="1">
    <location>
        <position position="95"/>
    </location>
</feature>
<feature type="active site" description="Proton acceptor" evidence="1">
    <location>
        <position position="165"/>
    </location>
</feature>
<feature type="binding site" evidence="1">
    <location>
        <position position="10"/>
    </location>
    <ligand>
        <name>substrate</name>
    </ligand>
</feature>
<feature type="binding site" evidence="1">
    <location>
        <position position="12"/>
    </location>
    <ligand>
        <name>substrate</name>
    </ligand>
</feature>
<evidence type="ECO:0000250" key="1"/>
<evidence type="ECO:0000305" key="2"/>
<dbReference type="EC" id="5.3.1.1"/>
<dbReference type="EMBL" id="AJ577476">
    <property type="protein sequence ID" value="CAE12106.1"/>
    <property type="molecule type" value="Genomic_DNA"/>
</dbReference>
<dbReference type="SMR" id="Q70JN8"/>
<dbReference type="VEuPathDB" id="FungiDB:KLMA_40125"/>
<dbReference type="UniPathway" id="UPA00109">
    <property type="reaction ID" value="UER00189"/>
</dbReference>
<dbReference type="UniPathway" id="UPA00138"/>
<dbReference type="GO" id="GO:0005829">
    <property type="term" value="C:cytosol"/>
    <property type="evidence" value="ECO:0007669"/>
    <property type="project" value="TreeGrafter"/>
</dbReference>
<dbReference type="GO" id="GO:0004807">
    <property type="term" value="F:triose-phosphate isomerase activity"/>
    <property type="evidence" value="ECO:0007669"/>
    <property type="project" value="UniProtKB-EC"/>
</dbReference>
<dbReference type="GO" id="GO:0006094">
    <property type="term" value="P:gluconeogenesis"/>
    <property type="evidence" value="ECO:0007669"/>
    <property type="project" value="UniProtKB-UniPathway"/>
</dbReference>
<dbReference type="GO" id="GO:0046166">
    <property type="term" value="P:glyceraldehyde-3-phosphate biosynthetic process"/>
    <property type="evidence" value="ECO:0007669"/>
    <property type="project" value="TreeGrafter"/>
</dbReference>
<dbReference type="GO" id="GO:0019563">
    <property type="term" value="P:glycerol catabolic process"/>
    <property type="evidence" value="ECO:0007669"/>
    <property type="project" value="TreeGrafter"/>
</dbReference>
<dbReference type="GO" id="GO:0006096">
    <property type="term" value="P:glycolytic process"/>
    <property type="evidence" value="ECO:0007669"/>
    <property type="project" value="UniProtKB-UniPathway"/>
</dbReference>
<dbReference type="CDD" id="cd00311">
    <property type="entry name" value="TIM"/>
    <property type="match status" value="1"/>
</dbReference>
<dbReference type="FunFam" id="3.20.20.70:FF:000025">
    <property type="entry name" value="Triosephosphate isomerase"/>
    <property type="match status" value="1"/>
</dbReference>
<dbReference type="Gene3D" id="3.20.20.70">
    <property type="entry name" value="Aldolase class I"/>
    <property type="match status" value="1"/>
</dbReference>
<dbReference type="HAMAP" id="MF_00147_B">
    <property type="entry name" value="TIM_B"/>
    <property type="match status" value="1"/>
</dbReference>
<dbReference type="InterPro" id="IPR013785">
    <property type="entry name" value="Aldolase_TIM"/>
</dbReference>
<dbReference type="InterPro" id="IPR035990">
    <property type="entry name" value="TIM_sf"/>
</dbReference>
<dbReference type="InterPro" id="IPR022896">
    <property type="entry name" value="TrioseP_Isoase_bac/euk"/>
</dbReference>
<dbReference type="InterPro" id="IPR000652">
    <property type="entry name" value="Triosephosphate_isomerase"/>
</dbReference>
<dbReference type="InterPro" id="IPR020861">
    <property type="entry name" value="Triosephosphate_isomerase_AS"/>
</dbReference>
<dbReference type="NCBIfam" id="TIGR00419">
    <property type="entry name" value="tim"/>
    <property type="match status" value="1"/>
</dbReference>
<dbReference type="PANTHER" id="PTHR21139">
    <property type="entry name" value="TRIOSEPHOSPHATE ISOMERASE"/>
    <property type="match status" value="1"/>
</dbReference>
<dbReference type="PANTHER" id="PTHR21139:SF41">
    <property type="entry name" value="TRIOSEPHOSPHATE ISOMERASE"/>
    <property type="match status" value="1"/>
</dbReference>
<dbReference type="Pfam" id="PF00121">
    <property type="entry name" value="TIM"/>
    <property type="match status" value="1"/>
</dbReference>
<dbReference type="SUPFAM" id="SSF51351">
    <property type="entry name" value="Triosephosphate isomerase (TIM)"/>
    <property type="match status" value="1"/>
</dbReference>
<dbReference type="PROSITE" id="PS00171">
    <property type="entry name" value="TIM_1"/>
    <property type="match status" value="1"/>
</dbReference>
<dbReference type="PROSITE" id="PS51440">
    <property type="entry name" value="TIM_2"/>
    <property type="match status" value="1"/>
</dbReference>
<gene>
    <name type="primary">TPI1</name>
</gene>
<keyword id="KW-0312">Gluconeogenesis</keyword>
<keyword id="KW-0324">Glycolysis</keyword>
<keyword id="KW-0413">Isomerase</keyword>
<accession>Q70JN8</accession>
<proteinExistence type="inferred from homology"/>
<protein>
    <recommendedName>
        <fullName>Triosephosphate isomerase</fullName>
        <shortName>TIM</shortName>
        <ecNumber>5.3.1.1</ecNumber>
    </recommendedName>
    <alternativeName>
        <fullName>Triose-phosphate isomerase</fullName>
    </alternativeName>
</protein>